<protein>
    <recommendedName>
        <fullName evidence="1">DNA-directed RNA polymerase subunit alpha</fullName>
        <shortName evidence="1">RNAP subunit alpha</shortName>
        <ecNumber evidence="1">2.7.7.6</ecNumber>
    </recommendedName>
    <alternativeName>
        <fullName evidence="1">RNA polymerase subunit alpha</fullName>
    </alternativeName>
    <alternativeName>
        <fullName evidence="1">Transcriptase subunit alpha</fullName>
    </alternativeName>
</protein>
<comment type="function">
    <text evidence="1">DNA-dependent RNA polymerase catalyzes the transcription of DNA into RNA using the four ribonucleoside triphosphates as substrates.</text>
</comment>
<comment type="catalytic activity">
    <reaction evidence="1">
        <text>RNA(n) + a ribonucleoside 5'-triphosphate = RNA(n+1) + diphosphate</text>
        <dbReference type="Rhea" id="RHEA:21248"/>
        <dbReference type="Rhea" id="RHEA-COMP:14527"/>
        <dbReference type="Rhea" id="RHEA-COMP:17342"/>
        <dbReference type="ChEBI" id="CHEBI:33019"/>
        <dbReference type="ChEBI" id="CHEBI:61557"/>
        <dbReference type="ChEBI" id="CHEBI:140395"/>
        <dbReference type="EC" id="2.7.7.6"/>
    </reaction>
</comment>
<comment type="subunit">
    <text evidence="1">Homodimer. The RNAP catalytic core consists of 2 alpha, 1 beta, 1 beta' and 1 omega subunit. When a sigma factor is associated with the core the holoenzyme is formed, which can initiate transcription.</text>
</comment>
<comment type="domain">
    <text evidence="1">The N-terminal domain is essential for RNAP assembly and basal transcription, whereas the C-terminal domain is involved in interaction with transcriptional regulators and with upstream promoter elements.</text>
</comment>
<comment type="similarity">
    <text evidence="1">Belongs to the RNA polymerase alpha chain family.</text>
</comment>
<organism>
    <name type="scientific">Laribacter hongkongensis (strain HLHK9)</name>
    <dbReference type="NCBI Taxonomy" id="557598"/>
    <lineage>
        <taxon>Bacteria</taxon>
        <taxon>Pseudomonadati</taxon>
        <taxon>Pseudomonadota</taxon>
        <taxon>Betaproteobacteria</taxon>
        <taxon>Neisseriales</taxon>
        <taxon>Aquaspirillaceae</taxon>
        <taxon>Laribacter</taxon>
    </lineage>
</organism>
<evidence type="ECO:0000255" key="1">
    <source>
        <dbReference type="HAMAP-Rule" id="MF_00059"/>
    </source>
</evidence>
<sequence length="327" mass="36074">MQNSASEFLKPRLIDVQPVSATQARVAMEPFERGYAYTLGNALRRILLSSMPGFAPTEVSIAGVLHEYSALDGVREDVVDILLNLKGVVFKLHGRDSVLLTLKKEGEGAVRASDIDLPHDVEVVNPDHVICHLAAGGKIDMEIKVEKGRGYQPAPARVKQDDNRQIGTILLDASFSPLRRVSFSVESARVEQRTDLDRLVMDIETNGVIEPEEAVRSAARILIDQLSIFADLQGTTVEVVEERAPQVDPILLRPVDDLELTVRSANCLKAENIYYIGDLIQRTETELLKTPNLGRKSLNEIKEVLASKGLTLGMKLENWPPAGLEKP</sequence>
<gene>
    <name evidence="1" type="primary">rpoA</name>
    <name type="ordered locus">LHK_00279</name>
</gene>
<keyword id="KW-0240">DNA-directed RNA polymerase</keyword>
<keyword id="KW-0548">Nucleotidyltransferase</keyword>
<keyword id="KW-1185">Reference proteome</keyword>
<keyword id="KW-0804">Transcription</keyword>
<keyword id="KW-0808">Transferase</keyword>
<reference key="1">
    <citation type="journal article" date="2009" name="PLoS Genet.">
        <title>The complete genome and proteome of Laribacter hongkongensis reveal potential mechanisms for adaptations to different temperatures and habitats.</title>
        <authorList>
            <person name="Woo P.C.Y."/>
            <person name="Lau S.K.P."/>
            <person name="Tse H."/>
            <person name="Teng J.L.L."/>
            <person name="Curreem S.O."/>
            <person name="Tsang A.K.L."/>
            <person name="Fan R.Y.Y."/>
            <person name="Wong G.K.M."/>
            <person name="Huang Y."/>
            <person name="Loman N.J."/>
            <person name="Snyder L.A.S."/>
            <person name="Cai J.J."/>
            <person name="Huang J.-D."/>
            <person name="Mak W."/>
            <person name="Pallen M.J."/>
            <person name="Lok S."/>
            <person name="Yuen K.-Y."/>
        </authorList>
    </citation>
    <scope>NUCLEOTIDE SEQUENCE [LARGE SCALE GENOMIC DNA]</scope>
    <source>
        <strain>HLHK9</strain>
    </source>
</reference>
<feature type="chain" id="PRO_1000196637" description="DNA-directed RNA polymerase subunit alpha">
    <location>
        <begin position="1"/>
        <end position="327"/>
    </location>
</feature>
<feature type="region of interest" description="Alpha N-terminal domain (alpha-NTD)" evidence="1">
    <location>
        <begin position="1"/>
        <end position="233"/>
    </location>
</feature>
<feature type="region of interest" description="Alpha C-terminal domain (alpha-CTD)" evidence="1">
    <location>
        <begin position="247"/>
        <end position="327"/>
    </location>
</feature>
<accession>C1DAU3</accession>
<dbReference type="EC" id="2.7.7.6" evidence="1"/>
<dbReference type="EMBL" id="CP001154">
    <property type="protein sequence ID" value="ACO73274.1"/>
    <property type="molecule type" value="Genomic_DNA"/>
</dbReference>
<dbReference type="RefSeq" id="WP_012695768.1">
    <property type="nucleotide sequence ID" value="NC_012559.1"/>
</dbReference>
<dbReference type="SMR" id="C1DAU3"/>
<dbReference type="STRING" id="557598.LHK_00279"/>
<dbReference type="GeneID" id="75109482"/>
<dbReference type="KEGG" id="lhk:LHK_00279"/>
<dbReference type="eggNOG" id="COG0202">
    <property type="taxonomic scope" value="Bacteria"/>
</dbReference>
<dbReference type="HOGENOM" id="CLU_053084_0_1_4"/>
<dbReference type="Proteomes" id="UP000002010">
    <property type="component" value="Chromosome"/>
</dbReference>
<dbReference type="GO" id="GO:0005737">
    <property type="term" value="C:cytoplasm"/>
    <property type="evidence" value="ECO:0007669"/>
    <property type="project" value="UniProtKB-ARBA"/>
</dbReference>
<dbReference type="GO" id="GO:0000428">
    <property type="term" value="C:DNA-directed RNA polymerase complex"/>
    <property type="evidence" value="ECO:0007669"/>
    <property type="project" value="UniProtKB-KW"/>
</dbReference>
<dbReference type="GO" id="GO:0003677">
    <property type="term" value="F:DNA binding"/>
    <property type="evidence" value="ECO:0007669"/>
    <property type="project" value="UniProtKB-UniRule"/>
</dbReference>
<dbReference type="GO" id="GO:0003899">
    <property type="term" value="F:DNA-directed RNA polymerase activity"/>
    <property type="evidence" value="ECO:0007669"/>
    <property type="project" value="UniProtKB-UniRule"/>
</dbReference>
<dbReference type="GO" id="GO:0046983">
    <property type="term" value="F:protein dimerization activity"/>
    <property type="evidence" value="ECO:0007669"/>
    <property type="project" value="InterPro"/>
</dbReference>
<dbReference type="GO" id="GO:0006351">
    <property type="term" value="P:DNA-templated transcription"/>
    <property type="evidence" value="ECO:0007669"/>
    <property type="project" value="UniProtKB-UniRule"/>
</dbReference>
<dbReference type="CDD" id="cd06928">
    <property type="entry name" value="RNAP_alpha_NTD"/>
    <property type="match status" value="1"/>
</dbReference>
<dbReference type="FunFam" id="1.10.150.20:FF:000001">
    <property type="entry name" value="DNA-directed RNA polymerase subunit alpha"/>
    <property type="match status" value="1"/>
</dbReference>
<dbReference type="FunFam" id="2.170.120.12:FF:000001">
    <property type="entry name" value="DNA-directed RNA polymerase subunit alpha"/>
    <property type="match status" value="1"/>
</dbReference>
<dbReference type="Gene3D" id="1.10.150.20">
    <property type="entry name" value="5' to 3' exonuclease, C-terminal subdomain"/>
    <property type="match status" value="1"/>
</dbReference>
<dbReference type="Gene3D" id="2.170.120.12">
    <property type="entry name" value="DNA-directed RNA polymerase, insert domain"/>
    <property type="match status" value="1"/>
</dbReference>
<dbReference type="Gene3D" id="3.30.1360.10">
    <property type="entry name" value="RNA polymerase, RBP11-like subunit"/>
    <property type="match status" value="1"/>
</dbReference>
<dbReference type="HAMAP" id="MF_00059">
    <property type="entry name" value="RNApol_bact_RpoA"/>
    <property type="match status" value="1"/>
</dbReference>
<dbReference type="InterPro" id="IPR011262">
    <property type="entry name" value="DNA-dir_RNA_pol_insert"/>
</dbReference>
<dbReference type="InterPro" id="IPR011263">
    <property type="entry name" value="DNA-dir_RNA_pol_RpoA/D/Rpb3"/>
</dbReference>
<dbReference type="InterPro" id="IPR011773">
    <property type="entry name" value="DNA-dir_RpoA"/>
</dbReference>
<dbReference type="InterPro" id="IPR036603">
    <property type="entry name" value="RBP11-like"/>
</dbReference>
<dbReference type="InterPro" id="IPR011260">
    <property type="entry name" value="RNAP_asu_C"/>
</dbReference>
<dbReference type="InterPro" id="IPR036643">
    <property type="entry name" value="RNApol_insert_sf"/>
</dbReference>
<dbReference type="NCBIfam" id="NF003513">
    <property type="entry name" value="PRK05182.1-2"/>
    <property type="match status" value="1"/>
</dbReference>
<dbReference type="NCBIfam" id="NF003519">
    <property type="entry name" value="PRK05182.2-5"/>
    <property type="match status" value="1"/>
</dbReference>
<dbReference type="NCBIfam" id="TIGR02027">
    <property type="entry name" value="rpoA"/>
    <property type="match status" value="1"/>
</dbReference>
<dbReference type="Pfam" id="PF01000">
    <property type="entry name" value="RNA_pol_A_bac"/>
    <property type="match status" value="1"/>
</dbReference>
<dbReference type="Pfam" id="PF03118">
    <property type="entry name" value="RNA_pol_A_CTD"/>
    <property type="match status" value="1"/>
</dbReference>
<dbReference type="Pfam" id="PF01193">
    <property type="entry name" value="RNA_pol_L"/>
    <property type="match status" value="1"/>
</dbReference>
<dbReference type="SMART" id="SM00662">
    <property type="entry name" value="RPOLD"/>
    <property type="match status" value="1"/>
</dbReference>
<dbReference type="SUPFAM" id="SSF47789">
    <property type="entry name" value="C-terminal domain of RNA polymerase alpha subunit"/>
    <property type="match status" value="1"/>
</dbReference>
<dbReference type="SUPFAM" id="SSF56553">
    <property type="entry name" value="Insert subdomain of RNA polymerase alpha subunit"/>
    <property type="match status" value="1"/>
</dbReference>
<dbReference type="SUPFAM" id="SSF55257">
    <property type="entry name" value="RBP11-like subunits of RNA polymerase"/>
    <property type="match status" value="1"/>
</dbReference>
<name>RPOA_LARHH</name>
<proteinExistence type="inferred from homology"/>